<gene>
    <name evidence="1" type="primary">guaA</name>
    <name type="ordered locus">CbuG_0667</name>
</gene>
<accession>B6IZE2</accession>
<dbReference type="EC" id="6.3.5.2" evidence="1"/>
<dbReference type="EMBL" id="CP001019">
    <property type="protein sequence ID" value="ACJ18070.1"/>
    <property type="molecule type" value="Genomic_DNA"/>
</dbReference>
<dbReference type="RefSeq" id="WP_012569871.1">
    <property type="nucleotide sequence ID" value="NC_011527.1"/>
</dbReference>
<dbReference type="SMR" id="B6IZE2"/>
<dbReference type="KEGG" id="cbg:CbuG_0667"/>
<dbReference type="HOGENOM" id="CLU_014340_0_5_6"/>
<dbReference type="UniPathway" id="UPA00189">
    <property type="reaction ID" value="UER00296"/>
</dbReference>
<dbReference type="GO" id="GO:0005829">
    <property type="term" value="C:cytosol"/>
    <property type="evidence" value="ECO:0007669"/>
    <property type="project" value="TreeGrafter"/>
</dbReference>
<dbReference type="GO" id="GO:0005524">
    <property type="term" value="F:ATP binding"/>
    <property type="evidence" value="ECO:0007669"/>
    <property type="project" value="UniProtKB-UniRule"/>
</dbReference>
<dbReference type="GO" id="GO:0003921">
    <property type="term" value="F:GMP synthase activity"/>
    <property type="evidence" value="ECO:0007669"/>
    <property type="project" value="InterPro"/>
</dbReference>
<dbReference type="CDD" id="cd01742">
    <property type="entry name" value="GATase1_GMP_Synthase"/>
    <property type="match status" value="1"/>
</dbReference>
<dbReference type="CDD" id="cd01997">
    <property type="entry name" value="GMP_synthase_C"/>
    <property type="match status" value="1"/>
</dbReference>
<dbReference type="FunFam" id="3.30.300.10:FF:000002">
    <property type="entry name" value="GMP synthase [glutamine-hydrolyzing]"/>
    <property type="match status" value="1"/>
</dbReference>
<dbReference type="FunFam" id="3.40.50.620:FF:000001">
    <property type="entry name" value="GMP synthase [glutamine-hydrolyzing]"/>
    <property type="match status" value="1"/>
</dbReference>
<dbReference type="FunFam" id="3.40.50.880:FF:000001">
    <property type="entry name" value="GMP synthase [glutamine-hydrolyzing]"/>
    <property type="match status" value="1"/>
</dbReference>
<dbReference type="Gene3D" id="3.30.300.10">
    <property type="match status" value="1"/>
</dbReference>
<dbReference type="Gene3D" id="3.40.50.880">
    <property type="match status" value="1"/>
</dbReference>
<dbReference type="Gene3D" id="3.40.50.620">
    <property type="entry name" value="HUPs"/>
    <property type="match status" value="1"/>
</dbReference>
<dbReference type="HAMAP" id="MF_00344">
    <property type="entry name" value="GMP_synthase"/>
    <property type="match status" value="1"/>
</dbReference>
<dbReference type="InterPro" id="IPR029062">
    <property type="entry name" value="Class_I_gatase-like"/>
</dbReference>
<dbReference type="InterPro" id="IPR017926">
    <property type="entry name" value="GATASE"/>
</dbReference>
<dbReference type="InterPro" id="IPR001674">
    <property type="entry name" value="GMP_synth_C"/>
</dbReference>
<dbReference type="InterPro" id="IPR004739">
    <property type="entry name" value="GMP_synth_GATase"/>
</dbReference>
<dbReference type="InterPro" id="IPR022955">
    <property type="entry name" value="GMP_synthase"/>
</dbReference>
<dbReference type="InterPro" id="IPR025777">
    <property type="entry name" value="GMPS_ATP_PPase_dom"/>
</dbReference>
<dbReference type="InterPro" id="IPR022310">
    <property type="entry name" value="NAD/GMP_synthase"/>
</dbReference>
<dbReference type="InterPro" id="IPR014729">
    <property type="entry name" value="Rossmann-like_a/b/a_fold"/>
</dbReference>
<dbReference type="NCBIfam" id="TIGR00884">
    <property type="entry name" value="guaA_Cterm"/>
    <property type="match status" value="1"/>
</dbReference>
<dbReference type="NCBIfam" id="TIGR00888">
    <property type="entry name" value="guaA_Nterm"/>
    <property type="match status" value="1"/>
</dbReference>
<dbReference type="NCBIfam" id="NF000848">
    <property type="entry name" value="PRK00074.1"/>
    <property type="match status" value="1"/>
</dbReference>
<dbReference type="PANTHER" id="PTHR11922:SF2">
    <property type="entry name" value="GMP SYNTHASE [GLUTAMINE-HYDROLYZING]"/>
    <property type="match status" value="1"/>
</dbReference>
<dbReference type="PANTHER" id="PTHR11922">
    <property type="entry name" value="GMP SYNTHASE-RELATED"/>
    <property type="match status" value="1"/>
</dbReference>
<dbReference type="Pfam" id="PF00117">
    <property type="entry name" value="GATase"/>
    <property type="match status" value="1"/>
</dbReference>
<dbReference type="Pfam" id="PF00958">
    <property type="entry name" value="GMP_synt_C"/>
    <property type="match status" value="1"/>
</dbReference>
<dbReference type="Pfam" id="PF02540">
    <property type="entry name" value="NAD_synthase"/>
    <property type="match status" value="1"/>
</dbReference>
<dbReference type="PRINTS" id="PR00097">
    <property type="entry name" value="ANTSNTHASEII"/>
</dbReference>
<dbReference type="PRINTS" id="PR00099">
    <property type="entry name" value="CPSGATASE"/>
</dbReference>
<dbReference type="PRINTS" id="PR00096">
    <property type="entry name" value="GATASE"/>
</dbReference>
<dbReference type="SUPFAM" id="SSF52402">
    <property type="entry name" value="Adenine nucleotide alpha hydrolases-like"/>
    <property type="match status" value="1"/>
</dbReference>
<dbReference type="SUPFAM" id="SSF52317">
    <property type="entry name" value="Class I glutamine amidotransferase-like"/>
    <property type="match status" value="1"/>
</dbReference>
<dbReference type="SUPFAM" id="SSF54810">
    <property type="entry name" value="GMP synthetase C-terminal dimerisation domain"/>
    <property type="match status" value="1"/>
</dbReference>
<dbReference type="PROSITE" id="PS51273">
    <property type="entry name" value="GATASE_TYPE_1"/>
    <property type="match status" value="1"/>
</dbReference>
<dbReference type="PROSITE" id="PS51553">
    <property type="entry name" value="GMPS_ATP_PPASE"/>
    <property type="match status" value="1"/>
</dbReference>
<keyword id="KW-0067">ATP-binding</keyword>
<keyword id="KW-0315">Glutamine amidotransferase</keyword>
<keyword id="KW-0332">GMP biosynthesis</keyword>
<keyword id="KW-0436">Ligase</keyword>
<keyword id="KW-0547">Nucleotide-binding</keyword>
<keyword id="KW-0658">Purine biosynthesis</keyword>
<proteinExistence type="inferred from homology"/>
<comment type="function">
    <text evidence="1">Catalyzes the synthesis of GMP from XMP.</text>
</comment>
<comment type="catalytic activity">
    <reaction evidence="1">
        <text>XMP + L-glutamine + ATP + H2O = GMP + L-glutamate + AMP + diphosphate + 2 H(+)</text>
        <dbReference type="Rhea" id="RHEA:11680"/>
        <dbReference type="ChEBI" id="CHEBI:15377"/>
        <dbReference type="ChEBI" id="CHEBI:15378"/>
        <dbReference type="ChEBI" id="CHEBI:29985"/>
        <dbReference type="ChEBI" id="CHEBI:30616"/>
        <dbReference type="ChEBI" id="CHEBI:33019"/>
        <dbReference type="ChEBI" id="CHEBI:57464"/>
        <dbReference type="ChEBI" id="CHEBI:58115"/>
        <dbReference type="ChEBI" id="CHEBI:58359"/>
        <dbReference type="ChEBI" id="CHEBI:456215"/>
        <dbReference type="EC" id="6.3.5.2"/>
    </reaction>
</comment>
<comment type="pathway">
    <text evidence="1">Purine metabolism; GMP biosynthesis; GMP from XMP (L-Gln route): step 1/1.</text>
</comment>
<comment type="subunit">
    <text evidence="1">Homodimer.</text>
</comment>
<feature type="chain" id="PRO_1000120267" description="GMP synthase [glutamine-hydrolyzing]">
    <location>
        <begin position="1"/>
        <end position="524"/>
    </location>
</feature>
<feature type="domain" description="Glutamine amidotransferase type-1" evidence="1">
    <location>
        <begin position="9"/>
        <end position="207"/>
    </location>
</feature>
<feature type="domain" description="GMPS ATP-PPase" evidence="1">
    <location>
        <begin position="208"/>
        <end position="399"/>
    </location>
</feature>
<feature type="active site" description="Nucleophile" evidence="1">
    <location>
        <position position="86"/>
    </location>
</feature>
<feature type="active site" evidence="1">
    <location>
        <position position="181"/>
    </location>
</feature>
<feature type="active site" evidence="1">
    <location>
        <position position="183"/>
    </location>
</feature>
<feature type="binding site" evidence="1">
    <location>
        <begin position="235"/>
        <end position="241"/>
    </location>
    <ligand>
        <name>ATP</name>
        <dbReference type="ChEBI" id="CHEBI:30616"/>
    </ligand>
</feature>
<evidence type="ECO:0000255" key="1">
    <source>
        <dbReference type="HAMAP-Rule" id="MF_00344"/>
    </source>
</evidence>
<name>GUAA_COXB2</name>
<protein>
    <recommendedName>
        <fullName evidence="1">GMP synthase [glutamine-hydrolyzing]</fullName>
        <ecNumber evidence="1">6.3.5.2</ecNumber>
    </recommendedName>
    <alternativeName>
        <fullName evidence="1">GMP synthetase</fullName>
    </alternativeName>
    <alternativeName>
        <fullName evidence="1">Glutamine amidotransferase</fullName>
    </alternativeName>
</protein>
<reference key="1">
    <citation type="journal article" date="2009" name="Infect. Immun.">
        <title>Comparative genomics reveal extensive transposon-mediated genomic plasticity and diversity among potential effector proteins within the genus Coxiella.</title>
        <authorList>
            <person name="Beare P.A."/>
            <person name="Unsworth N."/>
            <person name="Andoh M."/>
            <person name="Voth D.E."/>
            <person name="Omsland A."/>
            <person name="Gilk S.D."/>
            <person name="Williams K.P."/>
            <person name="Sobral B.W."/>
            <person name="Kupko J.J. III"/>
            <person name="Porcella S.F."/>
            <person name="Samuel J.E."/>
            <person name="Heinzen R.A."/>
        </authorList>
    </citation>
    <scope>NUCLEOTIDE SEQUENCE [LARGE SCALE GENOMIC DNA]</scope>
    <source>
        <strain>CbuG_Q212</strain>
    </source>
</reference>
<sequence length="524" mass="58709">MLKDIHQHRILILDFGSQYAQLIARRVREIGVYCELMPCDIDEETIRDFNPHGIILSGGPETVTLSHTLRAPAFIFEIGCPVLGICYGMQTMAYQLGGKVNRTAKAEFGHAQLRVLNPAFLFDGIEDQVSPQGEPLLDVWMSHGDIVSELPPGFEATACTDNSPLAAMADFKRRFFGLQFHPEVTHTPQGHRILAHFVIHICQCIPNWTTKHIIEDSIRDIQEKVGKEQVIVGLSGGVDSAVTATLVHKAIGDQLVCVLVDTGLLRLNEVDEVLNVFQKHLGAKVICVDAKDRFMKALKGISDPEEKRKIAGEQFIRVFEEQAKKLNVKWLGQGTIYPDVIESAKTKTGKGHIIKTHHNVGGLPLNMELKLIEPLRELFKDEVRKLGLELGLPADLIYRHPFPGPGLAIRILGEVNAEYINILKQADAIFIEELKKSDYYHQVSQAFAVFMPLKSVGVKGDARHYGYIIALRAVKTVDFMTAQWADLPHEFLSKVSHRIVNEIKEVSRVVYDMTNKPPATIEWE</sequence>
<organism>
    <name type="scientific">Coxiella burnetii (strain CbuG_Q212)</name>
    <name type="common">Coxiella burnetii (strain Q212)</name>
    <dbReference type="NCBI Taxonomy" id="434923"/>
    <lineage>
        <taxon>Bacteria</taxon>
        <taxon>Pseudomonadati</taxon>
        <taxon>Pseudomonadota</taxon>
        <taxon>Gammaproteobacteria</taxon>
        <taxon>Legionellales</taxon>
        <taxon>Coxiellaceae</taxon>
        <taxon>Coxiella</taxon>
    </lineage>
</organism>